<feature type="chain" id="PRO_0000063434" description="Chaperonin GroEL">
    <location>
        <begin position="1" status="less than"/>
        <end position="120" status="greater than"/>
    </location>
</feature>
<feature type="binding site" evidence="1">
    <location>
        <begin position="23"/>
        <end position="27"/>
    </location>
    <ligand>
        <name>ATP</name>
        <dbReference type="ChEBI" id="CHEBI:30616"/>
    </ligand>
</feature>
<feature type="sequence variant" description="In strain: 1299 and 1373.">
    <original>R</original>
    <variation>K</variation>
    <location>
        <position position="37"/>
    </location>
</feature>
<feature type="sequence variant" description="In strain: 1373.">
    <original>K</original>
    <variation>S</variation>
    <location>
        <position position="62"/>
    </location>
</feature>
<feature type="sequence variant" description="In strain: 1373.">
    <original>E</original>
    <variation>D</variation>
    <location>
        <position position="73"/>
    </location>
</feature>
<feature type="sequence variant" description="In strain: 1373.">
    <original>D</original>
    <variation>E</variation>
    <location>
        <position position="78"/>
    </location>
</feature>
<feature type="sequence variant" description="In strain: 1373.">
    <original>A</original>
    <variation>G</variation>
    <location>
        <position position="85"/>
    </location>
</feature>
<feature type="non-terminal residue">
    <location>
        <position position="1"/>
    </location>
</feature>
<feature type="non-terminal residue">
    <location>
        <position position="120"/>
    </location>
</feature>
<protein>
    <recommendedName>
        <fullName evidence="1">Chaperonin GroEL</fullName>
        <ecNumber evidence="1">5.6.1.7</ecNumber>
    </recommendedName>
    <alternativeName>
        <fullName evidence="1">60 kDa chaperonin</fullName>
    </alternativeName>
    <alternativeName>
        <fullName>65 kDa heat shock protein</fullName>
    </alternativeName>
    <alternativeName>
        <fullName evidence="1">Chaperonin-60</fullName>
        <shortName evidence="1">Cpn60</shortName>
    </alternativeName>
</protein>
<name>CH60_MYCIT</name>
<comment type="function">
    <text evidence="1">Together with its co-chaperonin GroES, plays an essential role in assisting protein folding. The GroEL-GroES system forms a nano-cage that allows encapsulation of the non-native substrate proteins and provides a physical environment optimized to promote and accelerate protein folding.</text>
</comment>
<comment type="catalytic activity">
    <reaction evidence="1">
        <text>ATP + H2O + a folded polypeptide = ADP + phosphate + an unfolded polypeptide.</text>
        <dbReference type="EC" id="5.6.1.7"/>
    </reaction>
</comment>
<comment type="subunit">
    <text evidence="1">Forms a cylinder of 14 subunits composed of two heptameric rings stacked back-to-back. Interacts with the co-chaperonin GroES.</text>
</comment>
<comment type="subcellular location">
    <subcellularLocation>
        <location evidence="1">Cytoplasm</location>
    </subcellularLocation>
</comment>
<comment type="similarity">
    <text evidence="1 2">Belongs to the chaperonin (HSP60) family.</text>
</comment>
<sequence>PYEKIGAELVKEVAKKTDDVAGDGTTTATVLAQALVREGLRNVAAGANPLGLKRGIEKAVEKVTETLLKSAKEVETKDQIAATAAISAGDQSIGDLIAEAMDKVGNEGVITVEESNTFGL</sequence>
<evidence type="ECO:0000255" key="1">
    <source>
        <dbReference type="HAMAP-Rule" id="MF_00600"/>
    </source>
</evidence>
<evidence type="ECO:0000305" key="2"/>
<keyword id="KW-0067">ATP-binding</keyword>
<keyword id="KW-0143">Chaperone</keyword>
<keyword id="KW-0963">Cytoplasm</keyword>
<keyword id="KW-0413">Isomerase</keyword>
<keyword id="KW-0547">Nucleotide-binding</keyword>
<keyword id="KW-0346">Stress response</keyword>
<gene>
    <name evidence="1" type="primary">groEL</name>
    <name evidence="1" type="synonym">groL</name>
    <name type="synonym">mopA</name>
</gene>
<proteinExistence type="inferred from homology"/>
<reference key="1">
    <citation type="journal article" date="1995" name="Arch. Pathol. Lab. Med.">
        <title>Rapid Mycobacterium species assignment and unambiguous identification of mutations associated with antimicrobial resistance in Mycobacterium tuberculosis by automated DNA sequencing.</title>
        <authorList>
            <person name="Kapur V."/>
            <person name="Li L.L."/>
            <person name="Hamrick M.R."/>
            <person name="Plikaytis B.B."/>
            <person name="Shinnick T.M."/>
            <person name="Telenti A."/>
            <person name="Jacobs W.R. Jr."/>
            <person name="Banerjee A."/>
            <person name="Cole S."/>
            <person name="Yuen K.Y."/>
            <person name="Clarridge J.E."/>
            <person name="Kreiswirth B.N."/>
            <person name="Musser J.M."/>
        </authorList>
    </citation>
    <scope>NUCLEOTIDE SEQUENCE [GENOMIC DNA]</scope>
    <source>
        <strain>1299</strain>
        <strain>1367</strain>
        <strain>1373</strain>
        <strain>89-1262</strain>
        <strain>89-963</strain>
        <strain>90-1336</strain>
        <strain>91-311</strain>
    </source>
</reference>
<reference key="2">
    <citation type="journal article" date="1995" name="Rinsho Byori">
        <title>Detection and identification of mycobacteria by PCR-RFLP method.</title>
        <authorList>
            <person name="Hidaka E."/>
            <person name="Ueno I."/>
            <person name="Kawakami Y."/>
            <person name="Furuwatari C."/>
            <person name="Furihata K."/>
            <person name="Katsuyama T."/>
        </authorList>
    </citation>
    <scope>NUCLEOTIDE SEQUENCE [GENOMIC DNA] OF 2-115</scope>
</reference>
<accession>Q49564</accession>
<accession>Q49565</accession>
<accession>Q49566</accession>
<accession>Q49567</accession>
<accession>Q49568</accession>
<accession>Q53492</accession>
<dbReference type="EC" id="5.6.1.7" evidence="1"/>
<dbReference type="EMBL" id="U17940">
    <property type="protein sequence ID" value="AAB39059.1"/>
    <property type="molecule type" value="Genomic_DNA"/>
</dbReference>
<dbReference type="EMBL" id="U17941">
    <property type="protein sequence ID" value="AAB39060.1"/>
    <property type="molecule type" value="Genomic_DNA"/>
</dbReference>
<dbReference type="EMBL" id="U17942">
    <property type="protein sequence ID" value="AAB39061.1"/>
    <property type="molecule type" value="Genomic_DNA"/>
</dbReference>
<dbReference type="EMBL" id="U17943">
    <property type="protein sequence ID" value="AAB39062.1"/>
    <property type="molecule type" value="Genomic_DNA"/>
</dbReference>
<dbReference type="EMBL" id="U17944">
    <property type="protein sequence ID" value="AAB39063.1"/>
    <property type="molecule type" value="Genomic_DNA"/>
</dbReference>
<dbReference type="EMBL" id="S76643">
    <property type="protein sequence ID" value="AAP31978.1"/>
    <property type="molecule type" value="Genomic_DNA"/>
</dbReference>
<dbReference type="SMR" id="Q49564"/>
<dbReference type="GO" id="GO:0005737">
    <property type="term" value="C:cytoplasm"/>
    <property type="evidence" value="ECO:0007669"/>
    <property type="project" value="UniProtKB-SubCell"/>
</dbReference>
<dbReference type="GO" id="GO:0005524">
    <property type="term" value="F:ATP binding"/>
    <property type="evidence" value="ECO:0007669"/>
    <property type="project" value="UniProtKB-KW"/>
</dbReference>
<dbReference type="GO" id="GO:0140662">
    <property type="term" value="F:ATP-dependent protein folding chaperone"/>
    <property type="evidence" value="ECO:0007669"/>
    <property type="project" value="InterPro"/>
</dbReference>
<dbReference type="GO" id="GO:0016853">
    <property type="term" value="F:isomerase activity"/>
    <property type="evidence" value="ECO:0007669"/>
    <property type="project" value="UniProtKB-KW"/>
</dbReference>
<dbReference type="GO" id="GO:0042026">
    <property type="term" value="P:protein refolding"/>
    <property type="evidence" value="ECO:0007669"/>
    <property type="project" value="InterPro"/>
</dbReference>
<dbReference type="Gene3D" id="1.10.560.10">
    <property type="entry name" value="GroEL-like equatorial domain"/>
    <property type="match status" value="1"/>
</dbReference>
<dbReference type="Gene3D" id="3.30.260.10">
    <property type="entry name" value="TCP-1-like chaperonin intermediate domain"/>
    <property type="match status" value="1"/>
</dbReference>
<dbReference type="InterPro" id="IPR001844">
    <property type="entry name" value="Cpn60/GroEL"/>
</dbReference>
<dbReference type="InterPro" id="IPR002423">
    <property type="entry name" value="Cpn60/GroEL/TCP-1"/>
</dbReference>
<dbReference type="InterPro" id="IPR027413">
    <property type="entry name" value="GROEL-like_equatorial_sf"/>
</dbReference>
<dbReference type="InterPro" id="IPR027410">
    <property type="entry name" value="TCP-1-like_intermed_sf"/>
</dbReference>
<dbReference type="PANTHER" id="PTHR45633">
    <property type="entry name" value="60 KDA HEAT SHOCK PROTEIN, MITOCHONDRIAL"/>
    <property type="match status" value="1"/>
</dbReference>
<dbReference type="Pfam" id="PF00118">
    <property type="entry name" value="Cpn60_TCP1"/>
    <property type="match status" value="1"/>
</dbReference>
<dbReference type="SUPFAM" id="SSF48592">
    <property type="entry name" value="GroEL equatorial domain-like"/>
    <property type="match status" value="1"/>
</dbReference>
<organism>
    <name type="scientific">Mycobacterium intracellulare</name>
    <dbReference type="NCBI Taxonomy" id="1767"/>
    <lineage>
        <taxon>Bacteria</taxon>
        <taxon>Bacillati</taxon>
        <taxon>Actinomycetota</taxon>
        <taxon>Actinomycetes</taxon>
        <taxon>Mycobacteriales</taxon>
        <taxon>Mycobacteriaceae</taxon>
        <taxon>Mycobacterium</taxon>
        <taxon>Mycobacterium avium complex (MAC)</taxon>
    </lineage>
</organism>